<dbReference type="EC" id="1.-.-.-"/>
<dbReference type="EMBL" id="CP001510">
    <property type="protein sequence ID" value="ACS38144.1"/>
    <property type="molecule type" value="Genomic_DNA"/>
</dbReference>
<dbReference type="EMBL" id="U28335">
    <property type="protein sequence ID" value="AAC44089.1"/>
    <property type="molecule type" value="Genomic_DNA"/>
</dbReference>
<dbReference type="RefSeq" id="WP_003597283.1">
    <property type="nucleotide sequence ID" value="NC_012808.1"/>
</dbReference>
<dbReference type="SMR" id="Q49117"/>
<dbReference type="STRING" id="272630.MexAM1_META1p0182"/>
<dbReference type="KEGG" id="mea:Mex_1p0182"/>
<dbReference type="eggNOG" id="COG1028">
    <property type="taxonomic scope" value="Bacteria"/>
</dbReference>
<dbReference type="HOGENOM" id="CLU_010194_1_3_5"/>
<dbReference type="OrthoDB" id="9803333at2"/>
<dbReference type="Proteomes" id="UP000009081">
    <property type="component" value="Chromosome"/>
</dbReference>
<dbReference type="GO" id="GO:0016491">
    <property type="term" value="F:oxidoreductase activity"/>
    <property type="evidence" value="ECO:0007669"/>
    <property type="project" value="UniProtKB-KW"/>
</dbReference>
<dbReference type="CDD" id="cd05362">
    <property type="entry name" value="THN_reductase-like_SDR_c"/>
    <property type="match status" value="1"/>
</dbReference>
<dbReference type="FunFam" id="3.40.50.720:FF:000084">
    <property type="entry name" value="Short-chain dehydrogenase reductase"/>
    <property type="match status" value="1"/>
</dbReference>
<dbReference type="Gene3D" id="3.40.50.720">
    <property type="entry name" value="NAD(P)-binding Rossmann-like Domain"/>
    <property type="match status" value="1"/>
</dbReference>
<dbReference type="InterPro" id="IPR036291">
    <property type="entry name" value="NAD(P)-bd_dom_sf"/>
</dbReference>
<dbReference type="InterPro" id="IPR020904">
    <property type="entry name" value="Sc_DH/Rdtase_CS"/>
</dbReference>
<dbReference type="InterPro" id="IPR002347">
    <property type="entry name" value="SDR_fam"/>
</dbReference>
<dbReference type="NCBIfam" id="NF005559">
    <property type="entry name" value="PRK07231.1"/>
    <property type="match status" value="1"/>
</dbReference>
<dbReference type="PANTHER" id="PTHR43639">
    <property type="entry name" value="OXIDOREDUCTASE, SHORT-CHAIN DEHYDROGENASE/REDUCTASE FAMILY (AFU_ORTHOLOGUE AFUA_5G02870)"/>
    <property type="match status" value="1"/>
</dbReference>
<dbReference type="PANTHER" id="PTHR43639:SF1">
    <property type="entry name" value="SHORT-CHAIN DEHYDROGENASE_REDUCTASE FAMILY PROTEIN"/>
    <property type="match status" value="1"/>
</dbReference>
<dbReference type="Pfam" id="PF13561">
    <property type="entry name" value="adh_short_C2"/>
    <property type="match status" value="1"/>
</dbReference>
<dbReference type="PRINTS" id="PR00081">
    <property type="entry name" value="GDHRDH"/>
</dbReference>
<dbReference type="PRINTS" id="PR00080">
    <property type="entry name" value="SDRFAMILY"/>
</dbReference>
<dbReference type="SMART" id="SM00822">
    <property type="entry name" value="PKS_KR"/>
    <property type="match status" value="1"/>
</dbReference>
<dbReference type="SUPFAM" id="SSF51735">
    <property type="entry name" value="NAD(P)-binding Rossmann-fold domains"/>
    <property type="match status" value="1"/>
</dbReference>
<dbReference type="PROSITE" id="PS00061">
    <property type="entry name" value="ADH_SHORT"/>
    <property type="match status" value="1"/>
</dbReference>
<accession>Q49117</accession>
<accession>C5AP85</accession>
<proteinExistence type="inferred from homology"/>
<sequence>MSKLEGKVAVVTGASKGIGAAIAKALAKDGAAVVVNYASSKAGADAVVEAITAAGGKAIAVQADVSQAVQARGLVEAAVQQFGRLDVLVNNSGVYEFAAIEEVTEEHYRRIFDVNVLGVLLATQAASKHLGEGGSIINISSVVTDVLMPTSAVYSGTKGALNAISGVLANELAPRKIRVNVVSPGYVVTEGTHTAGIAGSEMEAGLVAQTPLGRSGQPDDIAGVVAFLASDDARWVTGEVINASGGVR</sequence>
<name>Y182_METEA</name>
<keyword id="KW-0560">Oxidoreductase</keyword>
<keyword id="KW-1185">Reference proteome</keyword>
<feature type="chain" id="PRO_0000054884" description="Uncharacterized oxidoreductase MexAM1_META1p0182">
    <location>
        <begin position="1"/>
        <end position="248"/>
    </location>
</feature>
<feature type="active site" description="Proton acceptor" evidence="2">
    <location>
        <position position="154"/>
    </location>
</feature>
<feature type="binding site" evidence="1">
    <location>
        <position position="141"/>
    </location>
    <ligand>
        <name>substrate</name>
    </ligand>
</feature>
<comment type="similarity">
    <text evidence="3">Belongs to the short-chain dehydrogenases/reductases (SDR) family.</text>
</comment>
<gene>
    <name type="ordered locus">MexAM1_META1p0182</name>
</gene>
<reference key="1">
    <citation type="journal article" date="2009" name="PLoS ONE">
        <title>Methylobacterium genome sequences: a reference blueprint to investigate microbial metabolism of C1 compounds from natural and industrial sources.</title>
        <authorList>
            <person name="Vuilleumier S."/>
            <person name="Chistoserdova L."/>
            <person name="Lee M.-C."/>
            <person name="Bringel F."/>
            <person name="Lajus A."/>
            <person name="Zhou Y."/>
            <person name="Gourion B."/>
            <person name="Barbe V."/>
            <person name="Chang J."/>
            <person name="Cruveiller S."/>
            <person name="Dossat C."/>
            <person name="Gillett W."/>
            <person name="Gruffaz C."/>
            <person name="Haugen E."/>
            <person name="Hourcade E."/>
            <person name="Levy R."/>
            <person name="Mangenot S."/>
            <person name="Muller E."/>
            <person name="Nadalig T."/>
            <person name="Pagni M."/>
            <person name="Penny C."/>
            <person name="Peyraud R."/>
            <person name="Robinson D.G."/>
            <person name="Roche D."/>
            <person name="Rouy Z."/>
            <person name="Saenampechek C."/>
            <person name="Salvignol G."/>
            <person name="Vallenet D."/>
            <person name="Wu Z."/>
            <person name="Marx C.J."/>
            <person name="Vorholt J.A."/>
            <person name="Olson M.V."/>
            <person name="Kaul R."/>
            <person name="Weissenbach J."/>
            <person name="Medigue C."/>
            <person name="Lidstrom M.E."/>
        </authorList>
    </citation>
    <scope>NUCLEOTIDE SEQUENCE [LARGE SCALE GENOMIC DNA]</scope>
    <source>
        <strain>ATCC 14718 / DSM 1338 / JCM 2805 / NCIMB 9133 / AM1</strain>
    </source>
</reference>
<reference key="2">
    <citation type="journal article" date="1996" name="Microbiology">
        <title>A protein having similarity with methylmalonyl-CoA mutase is required for the assimilation of methanol and ethanol by Methylobacterium extorquens AM1.</title>
        <authorList>
            <person name="Smith L.M."/>
            <person name="Meijer W.G."/>
            <person name="Dijkhuizen L."/>
            <person name="Goodwin P.M."/>
        </authorList>
    </citation>
    <scope>NUCLEOTIDE SEQUENCE [GENOMIC DNA] OF 96-248</scope>
</reference>
<organism>
    <name type="scientific">Methylorubrum extorquens (strain ATCC 14718 / DSM 1338 / JCM 2805 / NCIMB 9133 / AM1)</name>
    <name type="common">Methylobacterium extorquens</name>
    <dbReference type="NCBI Taxonomy" id="272630"/>
    <lineage>
        <taxon>Bacteria</taxon>
        <taxon>Pseudomonadati</taxon>
        <taxon>Pseudomonadota</taxon>
        <taxon>Alphaproteobacteria</taxon>
        <taxon>Hyphomicrobiales</taxon>
        <taxon>Methylobacteriaceae</taxon>
        <taxon>Methylorubrum</taxon>
    </lineage>
</organism>
<evidence type="ECO:0000250" key="1"/>
<evidence type="ECO:0000255" key="2">
    <source>
        <dbReference type="PROSITE-ProRule" id="PRU10001"/>
    </source>
</evidence>
<evidence type="ECO:0000305" key="3"/>
<protein>
    <recommendedName>
        <fullName>Uncharacterized oxidoreductase MexAM1_META1p0182</fullName>
        <ecNumber>1.-.-.-</ecNumber>
    </recommendedName>
    <alternativeName>
        <fullName>ORFC</fullName>
    </alternativeName>
</protein>